<protein>
    <recommendedName>
        <fullName evidence="1">Glutamyl-tRNA reductase</fullName>
        <shortName evidence="1">GluTR</shortName>
        <ecNumber evidence="1">1.2.1.70</ecNumber>
    </recommendedName>
</protein>
<name>HEM1_SHEDO</name>
<dbReference type="EC" id="1.2.1.70" evidence="1"/>
<dbReference type="EMBL" id="CP000302">
    <property type="protein sequence ID" value="ABE54207.1"/>
    <property type="molecule type" value="Genomic_DNA"/>
</dbReference>
<dbReference type="RefSeq" id="WP_011495371.1">
    <property type="nucleotide sequence ID" value="NC_007954.1"/>
</dbReference>
<dbReference type="SMR" id="Q12QR9"/>
<dbReference type="STRING" id="318161.Sden_0919"/>
<dbReference type="KEGG" id="sdn:Sden_0919"/>
<dbReference type="eggNOG" id="COG0373">
    <property type="taxonomic scope" value="Bacteria"/>
</dbReference>
<dbReference type="HOGENOM" id="CLU_035113_2_2_6"/>
<dbReference type="OrthoDB" id="110209at2"/>
<dbReference type="UniPathway" id="UPA00251">
    <property type="reaction ID" value="UER00316"/>
</dbReference>
<dbReference type="Proteomes" id="UP000001982">
    <property type="component" value="Chromosome"/>
</dbReference>
<dbReference type="GO" id="GO:0008883">
    <property type="term" value="F:glutamyl-tRNA reductase activity"/>
    <property type="evidence" value="ECO:0007669"/>
    <property type="project" value="UniProtKB-UniRule"/>
</dbReference>
<dbReference type="GO" id="GO:0050661">
    <property type="term" value="F:NADP binding"/>
    <property type="evidence" value="ECO:0007669"/>
    <property type="project" value="InterPro"/>
</dbReference>
<dbReference type="GO" id="GO:0019353">
    <property type="term" value="P:protoporphyrinogen IX biosynthetic process from glutamate"/>
    <property type="evidence" value="ECO:0007669"/>
    <property type="project" value="TreeGrafter"/>
</dbReference>
<dbReference type="CDD" id="cd05213">
    <property type="entry name" value="NAD_bind_Glutamyl_tRNA_reduct"/>
    <property type="match status" value="1"/>
</dbReference>
<dbReference type="FunFam" id="3.30.460.30:FF:000001">
    <property type="entry name" value="Glutamyl-tRNA reductase"/>
    <property type="match status" value="1"/>
</dbReference>
<dbReference type="FunFam" id="3.40.50.720:FF:000031">
    <property type="entry name" value="Glutamyl-tRNA reductase"/>
    <property type="match status" value="1"/>
</dbReference>
<dbReference type="Gene3D" id="3.30.460.30">
    <property type="entry name" value="Glutamyl-tRNA reductase, N-terminal domain"/>
    <property type="match status" value="1"/>
</dbReference>
<dbReference type="Gene3D" id="3.40.50.720">
    <property type="entry name" value="NAD(P)-binding Rossmann-like Domain"/>
    <property type="match status" value="1"/>
</dbReference>
<dbReference type="HAMAP" id="MF_00087">
    <property type="entry name" value="Glu_tRNA_reductase"/>
    <property type="match status" value="1"/>
</dbReference>
<dbReference type="InterPro" id="IPR000343">
    <property type="entry name" value="4pyrrol_synth_GluRdtase"/>
</dbReference>
<dbReference type="InterPro" id="IPR015896">
    <property type="entry name" value="4pyrrol_synth_GluRdtase_dimer"/>
</dbReference>
<dbReference type="InterPro" id="IPR015895">
    <property type="entry name" value="4pyrrol_synth_GluRdtase_N"/>
</dbReference>
<dbReference type="InterPro" id="IPR018214">
    <property type="entry name" value="GluRdtase_CS"/>
</dbReference>
<dbReference type="InterPro" id="IPR036453">
    <property type="entry name" value="GluRdtase_dimer_dom_sf"/>
</dbReference>
<dbReference type="InterPro" id="IPR036343">
    <property type="entry name" value="GluRdtase_N_sf"/>
</dbReference>
<dbReference type="InterPro" id="IPR036291">
    <property type="entry name" value="NAD(P)-bd_dom_sf"/>
</dbReference>
<dbReference type="InterPro" id="IPR006151">
    <property type="entry name" value="Shikm_DH/Glu-tRNA_Rdtase"/>
</dbReference>
<dbReference type="NCBIfam" id="TIGR01035">
    <property type="entry name" value="hemA"/>
    <property type="match status" value="1"/>
</dbReference>
<dbReference type="PANTHER" id="PTHR43013">
    <property type="entry name" value="GLUTAMYL-TRNA REDUCTASE"/>
    <property type="match status" value="1"/>
</dbReference>
<dbReference type="PANTHER" id="PTHR43013:SF1">
    <property type="entry name" value="GLUTAMYL-TRNA REDUCTASE"/>
    <property type="match status" value="1"/>
</dbReference>
<dbReference type="Pfam" id="PF00745">
    <property type="entry name" value="GlutR_dimer"/>
    <property type="match status" value="1"/>
</dbReference>
<dbReference type="Pfam" id="PF05201">
    <property type="entry name" value="GlutR_N"/>
    <property type="match status" value="1"/>
</dbReference>
<dbReference type="Pfam" id="PF01488">
    <property type="entry name" value="Shikimate_DH"/>
    <property type="match status" value="1"/>
</dbReference>
<dbReference type="PIRSF" id="PIRSF000445">
    <property type="entry name" value="4pyrrol_synth_GluRdtase"/>
    <property type="match status" value="1"/>
</dbReference>
<dbReference type="SUPFAM" id="SSF69742">
    <property type="entry name" value="Glutamyl tRNA-reductase catalytic, N-terminal domain"/>
    <property type="match status" value="1"/>
</dbReference>
<dbReference type="SUPFAM" id="SSF69075">
    <property type="entry name" value="Glutamyl tRNA-reductase dimerization domain"/>
    <property type="match status" value="1"/>
</dbReference>
<dbReference type="SUPFAM" id="SSF51735">
    <property type="entry name" value="NAD(P)-binding Rossmann-fold domains"/>
    <property type="match status" value="1"/>
</dbReference>
<dbReference type="PROSITE" id="PS00747">
    <property type="entry name" value="GLUTR"/>
    <property type="match status" value="1"/>
</dbReference>
<evidence type="ECO:0000255" key="1">
    <source>
        <dbReference type="HAMAP-Rule" id="MF_00087"/>
    </source>
</evidence>
<feature type="chain" id="PRO_1000004688" description="Glutamyl-tRNA reductase">
    <location>
        <begin position="1"/>
        <end position="416"/>
    </location>
</feature>
<feature type="active site" description="Nucleophile" evidence="1">
    <location>
        <position position="50"/>
    </location>
</feature>
<feature type="binding site" evidence="1">
    <location>
        <begin position="49"/>
        <end position="52"/>
    </location>
    <ligand>
        <name>substrate</name>
    </ligand>
</feature>
<feature type="binding site" evidence="1">
    <location>
        <position position="105"/>
    </location>
    <ligand>
        <name>substrate</name>
    </ligand>
</feature>
<feature type="binding site" evidence="1">
    <location>
        <begin position="110"/>
        <end position="112"/>
    </location>
    <ligand>
        <name>substrate</name>
    </ligand>
</feature>
<feature type="binding site" evidence="1">
    <location>
        <position position="116"/>
    </location>
    <ligand>
        <name>substrate</name>
    </ligand>
</feature>
<feature type="binding site" evidence="1">
    <location>
        <begin position="185"/>
        <end position="190"/>
    </location>
    <ligand>
        <name>NADP(+)</name>
        <dbReference type="ChEBI" id="CHEBI:58349"/>
    </ligand>
</feature>
<feature type="site" description="Important for activity" evidence="1">
    <location>
        <position position="95"/>
    </location>
</feature>
<organism>
    <name type="scientific">Shewanella denitrificans (strain OS217 / ATCC BAA-1090 / DSM 15013)</name>
    <dbReference type="NCBI Taxonomy" id="318161"/>
    <lineage>
        <taxon>Bacteria</taxon>
        <taxon>Pseudomonadati</taxon>
        <taxon>Pseudomonadota</taxon>
        <taxon>Gammaproteobacteria</taxon>
        <taxon>Alteromonadales</taxon>
        <taxon>Shewanellaceae</taxon>
        <taxon>Shewanella</taxon>
    </lineage>
</organism>
<sequence>MSLVAIGINHKTATVDLREKVAFSPDSIHDAMKSLASRTRSGEAVILSTCNRTELYCNDAVATEVIEWLADYHDLNLQDLLACTYQHEDQAAVKHLMRVAAGLDSLVLGEPQILGQVKQAFVKAKEAGTTALTIDRLFQNTFSVAKKVRTETEIGAAAVSVAFAAVSMAKHIFSSLKATKVLLIGAGETIELVAKHLKDNGVASIVVANRTLERAQAMCQAFDATAITLQQIPDFLPKADIVISSTASPLPILGKGMVEKALKTRRHQPMLLVDIAVPRDIEAEVGELDDAFLYTVDDLHSIIEQNMASRKEAAEQAELITEDQSLLFMEWLTSLESVDSIREYRTQSLVIKDELVERALNKLAQGGDSEQVIIELANRLTNRLIHSPTQALTVASRQGDLTTLGQLRAALGLDKH</sequence>
<comment type="function">
    <text evidence="1">Catalyzes the NADPH-dependent reduction of glutamyl-tRNA(Glu) to glutamate 1-semialdehyde (GSA).</text>
</comment>
<comment type="catalytic activity">
    <reaction evidence="1">
        <text>(S)-4-amino-5-oxopentanoate + tRNA(Glu) + NADP(+) = L-glutamyl-tRNA(Glu) + NADPH + H(+)</text>
        <dbReference type="Rhea" id="RHEA:12344"/>
        <dbReference type="Rhea" id="RHEA-COMP:9663"/>
        <dbReference type="Rhea" id="RHEA-COMP:9680"/>
        <dbReference type="ChEBI" id="CHEBI:15378"/>
        <dbReference type="ChEBI" id="CHEBI:57501"/>
        <dbReference type="ChEBI" id="CHEBI:57783"/>
        <dbReference type="ChEBI" id="CHEBI:58349"/>
        <dbReference type="ChEBI" id="CHEBI:78442"/>
        <dbReference type="ChEBI" id="CHEBI:78520"/>
        <dbReference type="EC" id="1.2.1.70"/>
    </reaction>
</comment>
<comment type="pathway">
    <text evidence="1">Porphyrin-containing compound metabolism; protoporphyrin-IX biosynthesis; 5-aminolevulinate from L-glutamyl-tRNA(Glu): step 1/2.</text>
</comment>
<comment type="subunit">
    <text evidence="1">Homodimer.</text>
</comment>
<comment type="domain">
    <text evidence="1">Possesses an unusual extended V-shaped dimeric structure with each monomer consisting of three distinct domains arranged along a curved 'spinal' alpha-helix. The N-terminal catalytic domain specifically recognizes the glutamate moiety of the substrate. The second domain is the NADPH-binding domain, and the third C-terminal domain is responsible for dimerization.</text>
</comment>
<comment type="miscellaneous">
    <text evidence="1">During catalysis, the active site Cys acts as a nucleophile attacking the alpha-carbonyl group of tRNA-bound glutamate with the formation of a thioester intermediate between enzyme and glutamate, and the concomitant release of tRNA(Glu). The thioester intermediate is finally reduced by direct hydride transfer from NADPH, to form the product GSA.</text>
</comment>
<comment type="similarity">
    <text evidence="1">Belongs to the glutamyl-tRNA reductase family.</text>
</comment>
<reference key="1">
    <citation type="submission" date="2006-03" db="EMBL/GenBank/DDBJ databases">
        <title>Complete sequence of Shewanella denitrificans OS217.</title>
        <authorList>
            <consortium name="US DOE Joint Genome Institute"/>
            <person name="Copeland A."/>
            <person name="Lucas S."/>
            <person name="Lapidus A."/>
            <person name="Barry K."/>
            <person name="Detter J.C."/>
            <person name="Glavina del Rio T."/>
            <person name="Hammon N."/>
            <person name="Israni S."/>
            <person name="Dalin E."/>
            <person name="Tice H."/>
            <person name="Pitluck S."/>
            <person name="Brettin T."/>
            <person name="Bruce D."/>
            <person name="Han C."/>
            <person name="Tapia R."/>
            <person name="Gilna P."/>
            <person name="Kiss H."/>
            <person name="Schmutz J."/>
            <person name="Larimer F."/>
            <person name="Land M."/>
            <person name="Hauser L."/>
            <person name="Kyrpides N."/>
            <person name="Lykidis A."/>
            <person name="Richardson P."/>
        </authorList>
    </citation>
    <scope>NUCLEOTIDE SEQUENCE [LARGE SCALE GENOMIC DNA]</scope>
    <source>
        <strain>OS217 / ATCC BAA-1090 / DSM 15013</strain>
    </source>
</reference>
<gene>
    <name evidence="1" type="primary">hemA</name>
    <name type="ordered locus">Sden_0919</name>
</gene>
<keyword id="KW-0521">NADP</keyword>
<keyword id="KW-0560">Oxidoreductase</keyword>
<keyword id="KW-0627">Porphyrin biosynthesis</keyword>
<keyword id="KW-1185">Reference proteome</keyword>
<accession>Q12QR9</accession>
<proteinExistence type="inferred from homology"/>